<evidence type="ECO:0000255" key="1">
    <source>
        <dbReference type="HAMAP-Rule" id="MF_01102"/>
    </source>
</evidence>
<proteinExistence type="inferred from homology"/>
<protein>
    <recommendedName>
        <fullName evidence="1">tRNA 5-methylaminomethyl-2-thiouridine biosynthesis bifunctional protein MnmC</fullName>
        <shortName evidence="1">tRNA mnm(5)s(2)U biosynthesis bifunctional protein</shortName>
    </recommendedName>
    <domain>
        <recommendedName>
            <fullName evidence="1">tRNA (mnm(5)s(2)U34)-methyltransferase</fullName>
            <ecNumber evidence="1">2.1.1.61</ecNumber>
        </recommendedName>
    </domain>
    <domain>
        <recommendedName>
            <fullName evidence="1">FAD-dependent cmnm(5)s(2)U34 oxidoreductase</fullName>
            <ecNumber evidence="1">1.5.-.-</ecNumber>
        </recommendedName>
    </domain>
</protein>
<dbReference type="EC" id="2.1.1.61" evidence="1"/>
<dbReference type="EC" id="1.5.-.-" evidence="1"/>
<dbReference type="EMBL" id="CP000094">
    <property type="protein sequence ID" value="ABA75835.1"/>
    <property type="molecule type" value="Genomic_DNA"/>
</dbReference>
<dbReference type="RefSeq" id="WP_011335391.1">
    <property type="nucleotide sequence ID" value="NC_007492.2"/>
</dbReference>
<dbReference type="SMR" id="Q3K8R9"/>
<dbReference type="KEGG" id="pfo:Pfl01_4098"/>
<dbReference type="eggNOG" id="COG0665">
    <property type="taxonomic scope" value="Bacteria"/>
</dbReference>
<dbReference type="eggNOG" id="COG4121">
    <property type="taxonomic scope" value="Bacteria"/>
</dbReference>
<dbReference type="HOGENOM" id="CLU_022427_1_0_6"/>
<dbReference type="Proteomes" id="UP000002704">
    <property type="component" value="Chromosome"/>
</dbReference>
<dbReference type="GO" id="GO:0005737">
    <property type="term" value="C:cytoplasm"/>
    <property type="evidence" value="ECO:0007669"/>
    <property type="project" value="UniProtKB-SubCell"/>
</dbReference>
<dbReference type="GO" id="GO:0050660">
    <property type="term" value="F:flavin adenine dinucleotide binding"/>
    <property type="evidence" value="ECO:0007669"/>
    <property type="project" value="UniProtKB-UniRule"/>
</dbReference>
<dbReference type="GO" id="GO:0016645">
    <property type="term" value="F:oxidoreductase activity, acting on the CH-NH group of donors"/>
    <property type="evidence" value="ECO:0007669"/>
    <property type="project" value="InterPro"/>
</dbReference>
<dbReference type="GO" id="GO:0004808">
    <property type="term" value="F:tRNA (5-methylaminomethyl-2-thiouridylate)(34)-methyltransferase activity"/>
    <property type="evidence" value="ECO:0007669"/>
    <property type="project" value="UniProtKB-EC"/>
</dbReference>
<dbReference type="GO" id="GO:0032259">
    <property type="term" value="P:methylation"/>
    <property type="evidence" value="ECO:0007669"/>
    <property type="project" value="UniProtKB-KW"/>
</dbReference>
<dbReference type="GO" id="GO:0002098">
    <property type="term" value="P:tRNA wobble uridine modification"/>
    <property type="evidence" value="ECO:0007669"/>
    <property type="project" value="TreeGrafter"/>
</dbReference>
<dbReference type="Gene3D" id="3.30.9.10">
    <property type="entry name" value="D-Amino Acid Oxidase, subunit A, domain 2"/>
    <property type="match status" value="1"/>
</dbReference>
<dbReference type="Gene3D" id="3.50.50.60">
    <property type="entry name" value="FAD/NAD(P)-binding domain"/>
    <property type="match status" value="1"/>
</dbReference>
<dbReference type="Gene3D" id="3.40.50.150">
    <property type="entry name" value="Vaccinia Virus protein VP39"/>
    <property type="match status" value="1"/>
</dbReference>
<dbReference type="HAMAP" id="MF_01102">
    <property type="entry name" value="MnmC"/>
    <property type="match status" value="1"/>
</dbReference>
<dbReference type="InterPro" id="IPR006076">
    <property type="entry name" value="FAD-dep_OxRdtase"/>
</dbReference>
<dbReference type="InterPro" id="IPR036188">
    <property type="entry name" value="FAD/NAD-bd_sf"/>
</dbReference>
<dbReference type="InterPro" id="IPR008471">
    <property type="entry name" value="MnmC-like_methylTransf"/>
</dbReference>
<dbReference type="InterPro" id="IPR029063">
    <property type="entry name" value="SAM-dependent_MTases_sf"/>
</dbReference>
<dbReference type="InterPro" id="IPR023032">
    <property type="entry name" value="tRNA_MAMT_biosynth_bifunc_MnmC"/>
</dbReference>
<dbReference type="InterPro" id="IPR047785">
    <property type="entry name" value="tRNA_MNMC2"/>
</dbReference>
<dbReference type="InterPro" id="IPR017610">
    <property type="entry name" value="tRNA_S-uridine_synth_MnmC_C"/>
</dbReference>
<dbReference type="NCBIfam" id="TIGR03197">
    <property type="entry name" value="MnmC_Cterm"/>
    <property type="match status" value="1"/>
</dbReference>
<dbReference type="NCBIfam" id="NF002481">
    <property type="entry name" value="PRK01747.1-2"/>
    <property type="match status" value="1"/>
</dbReference>
<dbReference type="NCBIfam" id="NF033855">
    <property type="entry name" value="tRNA_MNMC2"/>
    <property type="match status" value="1"/>
</dbReference>
<dbReference type="PANTHER" id="PTHR13847">
    <property type="entry name" value="SARCOSINE DEHYDROGENASE-RELATED"/>
    <property type="match status" value="1"/>
</dbReference>
<dbReference type="PANTHER" id="PTHR13847:SF283">
    <property type="entry name" value="TRNA 5-METHYLAMINOMETHYL-2-THIOURIDINE BIOSYNTHESIS BIFUNCTIONAL PROTEIN MNMC"/>
    <property type="match status" value="1"/>
</dbReference>
<dbReference type="Pfam" id="PF01266">
    <property type="entry name" value="DAO"/>
    <property type="match status" value="1"/>
</dbReference>
<dbReference type="Pfam" id="PF05430">
    <property type="entry name" value="Methyltransf_30"/>
    <property type="match status" value="1"/>
</dbReference>
<dbReference type="SUPFAM" id="SSF51905">
    <property type="entry name" value="FAD/NAD(P)-binding domain"/>
    <property type="match status" value="1"/>
</dbReference>
<dbReference type="SUPFAM" id="SSF53335">
    <property type="entry name" value="S-adenosyl-L-methionine-dependent methyltransferases"/>
    <property type="match status" value="1"/>
</dbReference>
<reference key="1">
    <citation type="journal article" date="2009" name="Genome Biol.">
        <title>Genomic and genetic analyses of diversity and plant interactions of Pseudomonas fluorescens.</title>
        <authorList>
            <person name="Silby M.W."/>
            <person name="Cerdeno-Tarraga A.M."/>
            <person name="Vernikos G.S."/>
            <person name="Giddens S.R."/>
            <person name="Jackson R.W."/>
            <person name="Preston G.M."/>
            <person name="Zhang X.-X."/>
            <person name="Moon C.D."/>
            <person name="Gehrig S.M."/>
            <person name="Godfrey S.A.C."/>
            <person name="Knight C.G."/>
            <person name="Malone J.G."/>
            <person name="Robinson Z."/>
            <person name="Spiers A.J."/>
            <person name="Harris S."/>
            <person name="Challis G.L."/>
            <person name="Yaxley A.M."/>
            <person name="Harris D."/>
            <person name="Seeger K."/>
            <person name="Murphy L."/>
            <person name="Rutter S."/>
            <person name="Squares R."/>
            <person name="Quail M.A."/>
            <person name="Saunders E."/>
            <person name="Mavromatis K."/>
            <person name="Brettin T.S."/>
            <person name="Bentley S.D."/>
            <person name="Hothersall J."/>
            <person name="Stephens E."/>
            <person name="Thomas C.M."/>
            <person name="Parkhill J."/>
            <person name="Levy S.B."/>
            <person name="Rainey P.B."/>
            <person name="Thomson N.R."/>
        </authorList>
    </citation>
    <scope>NUCLEOTIDE SEQUENCE [LARGE SCALE GENOMIC DNA]</scope>
    <source>
        <strain>Pf0-1</strain>
    </source>
</reference>
<sequence length="659" mass="72139">MKPVMPHAQLDWDDQGRPRSRVFDDVYFSDQSGLDETRYVFLEQNRLAERFAALSAGGRLVIGETGFGTGLNFLCAWQLFEQHAVAGARLHFVSVEKFPLSPADLQRALALWPDLKRFSDQLLKHYVAIHQGFQRIVLDNGRITLTLLIGDALEQLPQLDGQIDAWFLDGFAPAKNPEMWTAELFAELARLAAPGSTISTFTSTGWVRRLLNAAGFKMKRTPGIGHKWEILRGEFLGWPEGVAPPAAAKPWFARPTRLTGDRRALVIGAGLAGCATAASLAARGWQVSLLERHDAVAQEASGNPQGVLYLKLSAHGTALSQLIVSGFGYTRRVLETLQRGTDWDDCGVLQLAFNEKERERQAQLASAFPEDLLQWLDQPEAQARAGVGLAHGGLYYPEGGWVHPPALCQAQSAQPGVTLLPHQEAVELRKVGDQWQAFDGERLIATAPVVVLAGAAEIKRFAQSGELPLKRIRGQITRLAQTAQSQALATVVCAEGYVAPARWGEHTLGASFDFSSDDLTPTTAEHLGNLAMLEEISTDLVARLHVSERDAESLQGRAAFRCTSPDYLPMVGPLADREAFTRIYAALSKDARQVPDMPCPWLDGLYVNSGHGSRGLITAPLSGELLAAWLDNEPLPLPRSVAEACHPNRFALRRLIRGK</sequence>
<organism>
    <name type="scientific">Pseudomonas fluorescens (strain Pf0-1)</name>
    <dbReference type="NCBI Taxonomy" id="205922"/>
    <lineage>
        <taxon>Bacteria</taxon>
        <taxon>Pseudomonadati</taxon>
        <taxon>Pseudomonadota</taxon>
        <taxon>Gammaproteobacteria</taxon>
        <taxon>Pseudomonadales</taxon>
        <taxon>Pseudomonadaceae</taxon>
        <taxon>Pseudomonas</taxon>
    </lineage>
</organism>
<name>MNMC_PSEPF</name>
<gene>
    <name evidence="1" type="primary">mnmC</name>
    <name type="ordered locus">Pfl01_4098</name>
</gene>
<accession>Q3K8R9</accession>
<feature type="chain" id="PRO_1000065007" description="tRNA 5-methylaminomethyl-2-thiouridine biosynthesis bifunctional protein MnmC">
    <location>
        <begin position="1"/>
        <end position="659"/>
    </location>
</feature>
<feature type="region of interest" description="tRNA (mnm(5)s(2)U34)-methyltransferase">
    <location>
        <begin position="1"/>
        <end position="236"/>
    </location>
</feature>
<feature type="region of interest" description="FAD-dependent cmnm(5)s(2)U34 oxidoreductase">
    <location>
        <begin position="267"/>
        <end position="659"/>
    </location>
</feature>
<keyword id="KW-0963">Cytoplasm</keyword>
<keyword id="KW-0274">FAD</keyword>
<keyword id="KW-0285">Flavoprotein</keyword>
<keyword id="KW-0489">Methyltransferase</keyword>
<keyword id="KW-0511">Multifunctional enzyme</keyword>
<keyword id="KW-0560">Oxidoreductase</keyword>
<keyword id="KW-0949">S-adenosyl-L-methionine</keyword>
<keyword id="KW-0808">Transferase</keyword>
<keyword id="KW-0819">tRNA processing</keyword>
<comment type="function">
    <text evidence="1">Catalyzes the last two steps in the biosynthesis of 5-methylaminomethyl-2-thiouridine (mnm(5)s(2)U) at the wobble position (U34) in tRNA. Catalyzes the FAD-dependent demodification of cmnm(5)s(2)U34 to nm(5)s(2)U34, followed by the transfer of a methyl group from S-adenosyl-L-methionine to nm(5)s(2)U34, to form mnm(5)s(2)U34.</text>
</comment>
<comment type="catalytic activity">
    <reaction evidence="1">
        <text>5-aminomethyl-2-thiouridine(34) in tRNA + S-adenosyl-L-methionine = 5-methylaminomethyl-2-thiouridine(34) in tRNA + S-adenosyl-L-homocysteine + H(+)</text>
        <dbReference type="Rhea" id="RHEA:19569"/>
        <dbReference type="Rhea" id="RHEA-COMP:10195"/>
        <dbReference type="Rhea" id="RHEA-COMP:10197"/>
        <dbReference type="ChEBI" id="CHEBI:15378"/>
        <dbReference type="ChEBI" id="CHEBI:57856"/>
        <dbReference type="ChEBI" id="CHEBI:59789"/>
        <dbReference type="ChEBI" id="CHEBI:74454"/>
        <dbReference type="ChEBI" id="CHEBI:74455"/>
        <dbReference type="EC" id="2.1.1.61"/>
    </reaction>
</comment>
<comment type="cofactor">
    <cofactor evidence="1">
        <name>FAD</name>
        <dbReference type="ChEBI" id="CHEBI:57692"/>
    </cofactor>
</comment>
<comment type="subcellular location">
    <subcellularLocation>
        <location evidence="1">Cytoplasm</location>
    </subcellularLocation>
</comment>
<comment type="similarity">
    <text evidence="1">In the N-terminal section; belongs to the methyltransferase superfamily. tRNA (mnm(5)s(2)U34)-methyltransferase family.</text>
</comment>
<comment type="similarity">
    <text evidence="1">In the C-terminal section; belongs to the DAO family.</text>
</comment>